<sequence length="484" mass="52842">MAIPVESFFLAPGGQGSLQHRLRQMVTEGILSGRFRPGDRMPSTRALAAHLGVARITVTLAYADLVASDYLLARGRSGTFVSAAAPDARKARPLPRDGARTDWARLLHPRAQGLPRPDRPRDWSLYRYPFIYGQADPELFDHQNWRACALQALGRREFHRLSADCYDEDDPLLVEYILRHILPRRGIAAVPSEVLITMGAQNGLWLAAQVLLGPGERAAMENPGYPGTRAVLGTTGAEVLSVDVDDRGLVPAQLPARLKLVVTTASHHCPTNATLPVERRLALLAAAEAGDFLILEDDYEFEMSFLQSAAPSLKSLDAGGRVVHVGSFSKSLFPGLRLGYLVAPAPFVAAVRALRATVLRHPPGQLQRTLALFLSLGHYDALVARMKAAYRLRREVMTKAIEDNGLQIAGQGGFGGSSFWMQAPGAVDTEDLALRLRAEGVLIEPGRVFFDPARERRNFYRLAYSSIGPAAIPEGIARIARALR</sequence>
<feature type="chain" id="PRO_0000430551" description="HTH-type transcriptional regulator TauR">
    <location>
        <begin position="1"/>
        <end position="484"/>
    </location>
</feature>
<feature type="domain" description="HTH gntR-type" evidence="3">
    <location>
        <begin position="16"/>
        <end position="84"/>
    </location>
</feature>
<feature type="DNA-binding region" description="H-T-H motif" evidence="3">
    <location>
        <begin position="44"/>
        <end position="63"/>
    </location>
</feature>
<feature type="modified residue" description="N6-(pyridoxal phosphate)lysine" evidence="1">
    <location>
        <position position="330"/>
    </location>
</feature>
<organism>
    <name type="scientific">Rhodobacter capsulatus (strain ATCC BAA-309 / NBRC 16581 / SB1003)</name>
    <dbReference type="NCBI Taxonomy" id="272942"/>
    <lineage>
        <taxon>Bacteria</taxon>
        <taxon>Pseudomonadati</taxon>
        <taxon>Pseudomonadota</taxon>
        <taxon>Alphaproteobacteria</taxon>
        <taxon>Rhodobacterales</taxon>
        <taxon>Rhodobacter group</taxon>
        <taxon>Rhodobacter</taxon>
    </lineage>
</organism>
<gene>
    <name evidence="5" type="primary">tauR</name>
    <name evidence="7" type="ordered locus">RCAP_rcc02239</name>
</gene>
<proteinExistence type="evidence at protein level"/>
<keyword id="KW-0010">Activator</keyword>
<keyword id="KW-0032">Aminotransferase</keyword>
<keyword id="KW-0238">DNA-binding</keyword>
<keyword id="KW-0663">Pyridoxal phosphate</keyword>
<keyword id="KW-1185">Reference proteome</keyword>
<keyword id="KW-0804">Transcription</keyword>
<keyword id="KW-0805">Transcription regulation</keyword>
<keyword id="KW-0808">Transferase</keyword>
<reference key="1">
    <citation type="journal article" date="2010" name="J. Bacteriol.">
        <title>Complete genome sequence of the photosynthetic purple nonsulfur bacterium Rhodobacter capsulatus SB 1003.</title>
        <authorList>
            <person name="Strnad H."/>
            <person name="Lapidus A."/>
            <person name="Paces J."/>
            <person name="Ulbrich P."/>
            <person name="Vlcek C."/>
            <person name="Paces V."/>
            <person name="Haselkorn R."/>
        </authorList>
    </citation>
    <scope>NUCLEOTIDE SEQUENCE [LARGE SCALE GENOMIC DNA]</scope>
    <source>
        <strain>ATCC BAA-309 / NBRC 16581 / SB1003</strain>
    </source>
</reference>
<reference key="2">
    <citation type="journal article" date="2008" name="J. Bacteriol.">
        <title>The GntR-like regulator TauR activates expression of taurine utilization genes in Rhodobacter capsulatus.</title>
        <authorList>
            <person name="Wiethaus J."/>
            <person name="Schubert B."/>
            <person name="Pfaender Y."/>
            <person name="Narberhaus F."/>
            <person name="Masepohl B."/>
        </authorList>
    </citation>
    <scope>FUNCTION</scope>
    <scope>DNA-BINDING</scope>
    <scope>INDUCTION</scope>
    <source>
        <strain>B10S</strain>
    </source>
</reference>
<dbReference type="EMBL" id="CP001312">
    <property type="protein sequence ID" value="ADE85969.1"/>
    <property type="molecule type" value="Genomic_DNA"/>
</dbReference>
<dbReference type="RefSeq" id="WP_013067948.1">
    <property type="nucleotide sequence ID" value="NC_014034.1"/>
</dbReference>
<dbReference type="SMR" id="D5AKX9"/>
<dbReference type="STRING" id="272942.RCAP_rcc02239"/>
<dbReference type="GeneID" id="31491081"/>
<dbReference type="KEGG" id="rcp:RCAP_rcc02239"/>
<dbReference type="eggNOG" id="COG1167">
    <property type="taxonomic scope" value="Bacteria"/>
</dbReference>
<dbReference type="HOGENOM" id="CLU_017584_0_1_5"/>
<dbReference type="OrthoDB" id="9808770at2"/>
<dbReference type="Proteomes" id="UP000002361">
    <property type="component" value="Chromosome"/>
</dbReference>
<dbReference type="GO" id="GO:0003677">
    <property type="term" value="F:DNA binding"/>
    <property type="evidence" value="ECO:0007669"/>
    <property type="project" value="UniProtKB-KW"/>
</dbReference>
<dbReference type="GO" id="GO:0003700">
    <property type="term" value="F:DNA-binding transcription factor activity"/>
    <property type="evidence" value="ECO:0007669"/>
    <property type="project" value="InterPro"/>
</dbReference>
<dbReference type="GO" id="GO:0030170">
    <property type="term" value="F:pyridoxal phosphate binding"/>
    <property type="evidence" value="ECO:0007669"/>
    <property type="project" value="InterPro"/>
</dbReference>
<dbReference type="GO" id="GO:0008483">
    <property type="term" value="F:transaminase activity"/>
    <property type="evidence" value="ECO:0007669"/>
    <property type="project" value="UniProtKB-KW"/>
</dbReference>
<dbReference type="GO" id="GO:0009058">
    <property type="term" value="P:biosynthetic process"/>
    <property type="evidence" value="ECO:0007669"/>
    <property type="project" value="InterPro"/>
</dbReference>
<dbReference type="CDD" id="cd00609">
    <property type="entry name" value="AAT_like"/>
    <property type="match status" value="1"/>
</dbReference>
<dbReference type="CDD" id="cd07377">
    <property type="entry name" value="WHTH_GntR"/>
    <property type="match status" value="1"/>
</dbReference>
<dbReference type="Gene3D" id="3.40.640.10">
    <property type="entry name" value="Type I PLP-dependent aspartate aminotransferase-like (Major domain)"/>
    <property type="match status" value="1"/>
</dbReference>
<dbReference type="Gene3D" id="1.10.10.10">
    <property type="entry name" value="Winged helix-like DNA-binding domain superfamily/Winged helix DNA-binding domain"/>
    <property type="match status" value="1"/>
</dbReference>
<dbReference type="InterPro" id="IPR004839">
    <property type="entry name" value="Aminotransferase_I/II_large"/>
</dbReference>
<dbReference type="InterPro" id="IPR051446">
    <property type="entry name" value="HTH_trans_reg/aminotransferase"/>
</dbReference>
<dbReference type="InterPro" id="IPR015424">
    <property type="entry name" value="PyrdxlP-dep_Trfase"/>
</dbReference>
<dbReference type="InterPro" id="IPR015421">
    <property type="entry name" value="PyrdxlP-dep_Trfase_major"/>
</dbReference>
<dbReference type="InterPro" id="IPR000524">
    <property type="entry name" value="Tscrpt_reg_HTH_GntR"/>
</dbReference>
<dbReference type="InterPro" id="IPR036388">
    <property type="entry name" value="WH-like_DNA-bd_sf"/>
</dbReference>
<dbReference type="InterPro" id="IPR036390">
    <property type="entry name" value="WH_DNA-bd_sf"/>
</dbReference>
<dbReference type="PANTHER" id="PTHR46577">
    <property type="entry name" value="HTH-TYPE TRANSCRIPTIONAL REGULATORY PROTEIN GABR"/>
    <property type="match status" value="1"/>
</dbReference>
<dbReference type="PANTHER" id="PTHR46577:SF1">
    <property type="entry name" value="HTH-TYPE TRANSCRIPTIONAL REGULATORY PROTEIN GABR"/>
    <property type="match status" value="1"/>
</dbReference>
<dbReference type="Pfam" id="PF00155">
    <property type="entry name" value="Aminotran_1_2"/>
    <property type="match status" value="1"/>
</dbReference>
<dbReference type="Pfam" id="PF00392">
    <property type="entry name" value="GntR"/>
    <property type="match status" value="1"/>
</dbReference>
<dbReference type="SMART" id="SM00345">
    <property type="entry name" value="HTH_GNTR"/>
    <property type="match status" value="1"/>
</dbReference>
<dbReference type="SUPFAM" id="SSF53383">
    <property type="entry name" value="PLP-dependent transferases"/>
    <property type="match status" value="1"/>
</dbReference>
<dbReference type="SUPFAM" id="SSF46785">
    <property type="entry name" value="Winged helix' DNA-binding domain"/>
    <property type="match status" value="1"/>
</dbReference>
<dbReference type="PROSITE" id="PS50949">
    <property type="entry name" value="HTH_GNTR"/>
    <property type="match status" value="1"/>
</dbReference>
<comment type="function">
    <text evidence="4">Transcriptional activator, which is essential for taurine-dependent expression of the tpa-tauR-xsc operon. Acts by binding to direct repeats in the promoter region.</text>
</comment>
<comment type="cofactor">
    <cofactor evidence="2">
        <name>pyridoxal 5'-phosphate</name>
        <dbReference type="ChEBI" id="CHEBI:597326"/>
    </cofactor>
</comment>
<comment type="induction">
    <text evidence="4">Induced by taurine. Positively autoregulated.</text>
</comment>
<comment type="miscellaneous">
    <text evidence="4">In vitro, taurine does not influence the binding of TauR to the tpa promoter.</text>
</comment>
<comment type="similarity">
    <text evidence="6">In the C-terminal section; belongs to the class-I pyridoxal-phosphate-dependent aminotransferase family.</text>
</comment>
<evidence type="ECO:0000250" key="1"/>
<evidence type="ECO:0000250" key="2">
    <source>
        <dbReference type="UniProtKB" id="P94426"/>
    </source>
</evidence>
<evidence type="ECO:0000255" key="3">
    <source>
        <dbReference type="PROSITE-ProRule" id="PRU00307"/>
    </source>
</evidence>
<evidence type="ECO:0000269" key="4">
    <source>
    </source>
</evidence>
<evidence type="ECO:0000303" key="5">
    <source>
    </source>
</evidence>
<evidence type="ECO:0000305" key="6"/>
<evidence type="ECO:0000312" key="7">
    <source>
        <dbReference type="EMBL" id="ADE85969.1"/>
    </source>
</evidence>
<protein>
    <recommendedName>
        <fullName evidence="6">HTH-type transcriptional regulator TauR</fullName>
    </recommendedName>
</protein>
<name>TAUR_RHOCB</name>
<accession>D5AKX9</accession>